<protein>
    <recommendedName>
        <fullName>Sodium/potassium-transporting ATPase subunit beta-1</fullName>
    </recommendedName>
    <alternativeName>
        <fullName>Sodium/potassium-dependent ATPase subunit beta-1</fullName>
    </alternativeName>
</protein>
<proteinExistence type="evidence at protein level"/>
<name>AT1B1_HUMAN</name>
<accession>P05026</accession>
<accession>Q5TGZ3</accession>
<gene>
    <name type="primary">ATP1B1</name>
    <name type="synonym">ATP1B</name>
</gene>
<organism>
    <name type="scientific">Homo sapiens</name>
    <name type="common">Human</name>
    <dbReference type="NCBI Taxonomy" id="9606"/>
    <lineage>
        <taxon>Eukaryota</taxon>
        <taxon>Metazoa</taxon>
        <taxon>Chordata</taxon>
        <taxon>Craniata</taxon>
        <taxon>Vertebrata</taxon>
        <taxon>Euteleostomi</taxon>
        <taxon>Mammalia</taxon>
        <taxon>Eutheria</taxon>
        <taxon>Euarchontoglires</taxon>
        <taxon>Primates</taxon>
        <taxon>Haplorrhini</taxon>
        <taxon>Catarrhini</taxon>
        <taxon>Hominidae</taxon>
        <taxon>Homo</taxon>
    </lineage>
</organism>
<keyword id="KW-0002">3D-structure</keyword>
<keyword id="KW-0025">Alternative splicing</keyword>
<keyword id="KW-0130">Cell adhesion</keyword>
<keyword id="KW-1003">Cell membrane</keyword>
<keyword id="KW-1015">Disulfide bond</keyword>
<keyword id="KW-0318">Glutathionylation</keyword>
<keyword id="KW-0325">Glycoprotein</keyword>
<keyword id="KW-0391">Immunity</keyword>
<keyword id="KW-0399">Innate immunity</keyword>
<keyword id="KW-0406">Ion transport</keyword>
<keyword id="KW-0472">Membrane</keyword>
<keyword id="KW-0597">Phosphoprotein</keyword>
<keyword id="KW-0630">Potassium</keyword>
<keyword id="KW-0633">Potassium transport</keyword>
<keyword id="KW-1267">Proteomics identification</keyword>
<keyword id="KW-1185">Reference proteome</keyword>
<keyword id="KW-0735">Signal-anchor</keyword>
<keyword id="KW-0915">Sodium</keyword>
<keyword id="KW-0739">Sodium transport</keyword>
<keyword id="KW-0740">Sodium/potassium transport</keyword>
<keyword id="KW-0812">Transmembrane</keyword>
<keyword id="KW-1133">Transmembrane helix</keyword>
<keyword id="KW-0813">Transport</keyword>
<comment type="function">
    <text evidence="8 11">This is the non-catalytic component of the active enzyme, which catalyzes the hydrolysis of ATP coupled with the exchange of Na(+) and K(+) ions across the plasma membrane. The beta subunit regulates, through assembly of alpha/beta heterodimers, the number of sodium pumps transported to the plasma membrane (PubMed:19694409). Plays a role in innate immunity by enhancing virus-triggered induction of interferons (IFNs) and interferon stimulated genes (ISGs). Mechanistically, enhances the ubiquitination of TRAF3 and TRAF6 as well as the phosphorylation of TAK1 and TBK1 (PubMed:34011520).</text>
</comment>
<comment type="function">
    <text evidence="8">Involved in cell adhesion and establishing epithelial cell polarity.</text>
</comment>
<comment type="subunit">
    <text evidence="2 3 9 10 11">The sodium/potassium-transporting ATPase is composed of a catalytic alpha subunit, an auxiliary non-catalytic beta subunit and an additional regulatory subunit. Interacts with catalytic subunit ATP12A (By similarity). Interacts with regulatory subunit FXYD1 (By similarity). Interacts with regulatory subunit FXYD3 (By similarity). Interacts with NKAIN1, NKAIN2 and NKAIN4 (By similarity). Interacts with MLC1 (PubMed:22328087). Part of a complex containing MLC1, TRPV4, AQP4 and HEPACAM (PubMed:22328087). Interacts with KIRREL3 (PubMed:25902260). Interacts with OBSCN (via protein kinase domain 1) (By similarity). Interacts with TRAF3 and TRAF6 (PubMed:34011520).</text>
</comment>
<comment type="interaction">
    <interactant intactId="EBI-714630">
        <id>P05026</id>
    </interactant>
    <interactant intactId="EBI-6623016">
        <id>P30556</id>
        <label>AGTR1</label>
    </interactant>
    <organismsDiffer>false</organismsDiffer>
    <experiments>2</experiments>
</comment>
<comment type="interaction">
    <interactant intactId="EBI-714630">
        <id>P05026</id>
    </interactant>
    <interactant intactId="EBI-77613">
        <id>P05067</id>
        <label>APP</label>
    </interactant>
    <organismsDiffer>false</organismsDiffer>
    <experiments>3</experiments>
</comment>
<comment type="interaction">
    <interactant intactId="EBI-714630">
        <id>P05026</id>
    </interactant>
    <interactant intactId="EBI-358778">
        <id>P05023</id>
        <label>ATP1A1</label>
    </interactant>
    <organismsDiffer>false</organismsDiffer>
    <experiments>16</experiments>
</comment>
<comment type="interaction">
    <interactant intactId="EBI-714630">
        <id>P05026</id>
    </interactant>
    <interactant intactId="EBI-16427312">
        <id>Q8IZU9</id>
        <label>KIRREL3</label>
    </interactant>
    <organismsDiffer>false</organismsDiffer>
    <experiments>4</experiments>
</comment>
<comment type="interaction">
    <interactant intactId="EBI-714630">
        <id>P05026</id>
    </interactant>
    <interactant intactId="EBI-7576138">
        <id>P02730</id>
        <label>SLC4A1</label>
    </interactant>
    <organismsDiffer>false</organismsDiffer>
    <experiments>8</experiments>
</comment>
<comment type="interaction">
    <interactant intactId="EBI-714630">
        <id>P05026</id>
    </interactant>
    <interactant intactId="EBI-26451163">
        <id>PRO_0000033087</id>
        <label>SST</label>
        <dbReference type="UniProtKB" id="P61278"/>
    </interactant>
    <organismsDiffer>false</organismsDiffer>
    <experiments>2</experiments>
</comment>
<comment type="interaction">
    <interactant intactId="EBI-714630">
        <id>P05026</id>
    </interactant>
    <interactant intactId="EBI-720609">
        <id>O76024</id>
        <label>WFS1</label>
    </interactant>
    <organismsDiffer>false</organismsDiffer>
    <experiments>6</experiments>
</comment>
<comment type="subcellular location">
    <subcellularLocation>
        <location evidence="11">Cell membrane</location>
        <topology evidence="4">Single-pass type II membrane protein</topology>
    </subcellularLocation>
    <subcellularLocation>
        <location evidence="2">Apical cell membrane</location>
        <topology evidence="4">Single-pass type II membrane protein</topology>
    </subcellularLocation>
    <subcellularLocation>
        <location evidence="3">Cell membrane</location>
        <location evidence="3">Sarcolemma</location>
    </subcellularLocation>
    <text evidence="3">Colocalizes with OBSCN at the intercalated disk and sarcolemma in cardiomyocytes. Localizes in long striations at the level of Z and M lines.</text>
</comment>
<comment type="alternative products">
    <event type="alternative splicing"/>
    <isoform>
        <id>P05026-1</id>
        <name>1</name>
        <sequence type="displayed"/>
    </isoform>
    <isoform>
        <id>P05026-2</id>
        <name>2</name>
        <sequence type="described" ref="VSP_000349"/>
    </isoform>
</comment>
<comment type="tissue specificity">
    <text>Found in most tissues.</text>
</comment>
<comment type="domain">
    <text evidence="1">The C-terminal lobe folds into an immunoglobulin-like domain and mediates cell adhesion properties.</text>
</comment>
<comment type="PTM">
    <text evidence="2 3">Glutathionylated (By similarity). N-glycosylated (By similarity).</text>
</comment>
<comment type="similarity">
    <text evidence="13">Belongs to the X(+)/potassium ATPases subunit beta family.</text>
</comment>
<dbReference type="EMBL" id="X03747">
    <property type="protein sequence ID" value="CAA27385.1"/>
    <property type="molecule type" value="mRNA"/>
</dbReference>
<dbReference type="EMBL" id="M25160">
    <property type="protein sequence ID" value="AAA36352.1"/>
    <property type="molecule type" value="Genomic_DNA"/>
</dbReference>
<dbReference type="EMBL" id="M25161">
    <property type="protein sequence ID" value="AAA36352.1"/>
    <property type="status" value="JOINED"/>
    <property type="molecule type" value="Genomic_DNA"/>
</dbReference>
<dbReference type="EMBL" id="U16799">
    <property type="protein sequence ID" value="AAC50132.1"/>
    <property type="molecule type" value="mRNA"/>
</dbReference>
<dbReference type="EMBL" id="BT009787">
    <property type="protein sequence ID" value="AAP88789.1"/>
    <property type="molecule type" value="mRNA"/>
</dbReference>
<dbReference type="EMBL" id="AL031726">
    <property type="status" value="NOT_ANNOTATED_CDS"/>
    <property type="molecule type" value="Genomic_DNA"/>
</dbReference>
<dbReference type="EMBL" id="BC000006">
    <property type="protein sequence ID" value="AAH00006.1"/>
    <property type="molecule type" value="mRNA"/>
</dbReference>
<dbReference type="EMBL" id="X17161">
    <property type="protein sequence ID" value="CAA35040.1"/>
    <property type="molecule type" value="Genomic_DNA"/>
</dbReference>
<dbReference type="CCDS" id="CCDS1276.1">
    <molecule id="P05026-1"/>
</dbReference>
<dbReference type="PIR" id="A23764">
    <property type="entry name" value="PWHUNB"/>
</dbReference>
<dbReference type="RefSeq" id="NP_001668.1">
    <molecule id="P05026-1"/>
    <property type="nucleotide sequence ID" value="NM_001677.4"/>
</dbReference>
<dbReference type="PDB" id="7E1Z">
    <property type="method" value="EM"/>
    <property type="resolution" value="3.20 A"/>
    <property type="chains" value="B=1-303"/>
</dbReference>
<dbReference type="PDB" id="7E20">
    <property type="method" value="EM"/>
    <property type="resolution" value="2.70 A"/>
    <property type="chains" value="B=1-303"/>
</dbReference>
<dbReference type="PDB" id="7E21">
    <property type="method" value="EM"/>
    <property type="resolution" value="2.90 A"/>
    <property type="chains" value="B=1-303"/>
</dbReference>
<dbReference type="PDB" id="8D3U">
    <property type="method" value="EM"/>
    <property type="resolution" value="3.70 A"/>
    <property type="chains" value="B=1-303"/>
</dbReference>
<dbReference type="PDB" id="8D3V">
    <property type="method" value="EM"/>
    <property type="resolution" value="3.40 A"/>
    <property type="chains" value="B=1-303"/>
</dbReference>
<dbReference type="PDB" id="8D3W">
    <property type="method" value="EM"/>
    <property type="resolution" value="3.50 A"/>
    <property type="chains" value="B=1-303"/>
</dbReference>
<dbReference type="PDB" id="8D3X">
    <property type="method" value="EM"/>
    <property type="resolution" value="4.10 A"/>
    <property type="chains" value="B=1-303"/>
</dbReference>
<dbReference type="PDB" id="8D3Y">
    <property type="method" value="EM"/>
    <property type="resolution" value="3.90 A"/>
    <property type="chains" value="B=1-303"/>
</dbReference>
<dbReference type="PDB" id="8ZYJ">
    <property type="method" value="EM"/>
    <property type="resolution" value="2.37 A"/>
    <property type="chains" value="B=1-303"/>
</dbReference>
<dbReference type="PDBsum" id="7E1Z"/>
<dbReference type="PDBsum" id="7E20"/>
<dbReference type="PDBsum" id="7E21"/>
<dbReference type="PDBsum" id="8D3U"/>
<dbReference type="PDBsum" id="8D3V"/>
<dbReference type="PDBsum" id="8D3W"/>
<dbReference type="PDBsum" id="8D3X"/>
<dbReference type="PDBsum" id="8D3Y"/>
<dbReference type="PDBsum" id="8ZYJ"/>
<dbReference type="EMDB" id="EMD-27164"/>
<dbReference type="EMDB" id="EMD-27165"/>
<dbReference type="EMDB" id="EMD-27166"/>
<dbReference type="EMDB" id="EMD-27167"/>
<dbReference type="EMDB" id="EMD-27168"/>
<dbReference type="EMDB" id="EMD-30947"/>
<dbReference type="EMDB" id="EMD-30948"/>
<dbReference type="EMDB" id="EMD-30949"/>
<dbReference type="EMDB" id="EMD-60570"/>
<dbReference type="SMR" id="P05026"/>
<dbReference type="BioGRID" id="106971">
    <property type="interactions" value="163"/>
</dbReference>
<dbReference type="ComplexPortal" id="CPX-125">
    <property type="entry name" value="Sodium:potassium-exchanging ATPase complex, FXYD2 variant"/>
</dbReference>
<dbReference type="ComplexPortal" id="CPX-8009">
    <property type="entry name" value="Sodium:potassium-exchanging ATPase complex, FXYD1 variant"/>
</dbReference>
<dbReference type="ComplexPortal" id="CPX-8141">
    <property type="entry name" value="Sodium:potassium-exchanging ATPase complex, FXYD3 variant"/>
</dbReference>
<dbReference type="ComplexPortal" id="CPX-8142">
    <property type="entry name" value="Sodium:potassium-exchanging ATPase complex, FXYD4 variant"/>
</dbReference>
<dbReference type="ComplexPortal" id="CPX-8143">
    <property type="entry name" value="Sodium:potassium-exchanging ATPase complex, FXYD5 variant"/>
</dbReference>
<dbReference type="ComplexPortal" id="CPX-8144">
    <property type="entry name" value="Sodium:potassium-exchanging ATPase complex, FXYD6 variant"/>
</dbReference>
<dbReference type="ComplexPortal" id="CPX-8146">
    <property type="entry name" value="Sodium:potassium-exchanging ATPase complex, FXYD7 variant"/>
</dbReference>
<dbReference type="CORUM" id="P05026"/>
<dbReference type="FunCoup" id="P05026">
    <property type="interactions" value="1240"/>
</dbReference>
<dbReference type="IntAct" id="P05026">
    <property type="interactions" value="71"/>
</dbReference>
<dbReference type="MINT" id="P05026"/>
<dbReference type="STRING" id="9606.ENSP00000356790"/>
<dbReference type="BindingDB" id="P05026"/>
<dbReference type="ChEMBL" id="CHEMBL2095186"/>
<dbReference type="DrugBank" id="DB09020">
    <property type="generic name" value="Bisacodyl"/>
</dbReference>
<dbReference type="DrugBank" id="DB01396">
    <property type="generic name" value="Digitoxin"/>
</dbReference>
<dbReference type="DrugBank" id="DB00390">
    <property type="generic name" value="Digoxin"/>
</dbReference>
<dbReference type="DrugBank" id="DB06157">
    <property type="generic name" value="Istaroxime"/>
</dbReference>
<dbReference type="DrugBank" id="DB12843">
    <property type="generic name" value="Oleandrin"/>
</dbReference>
<dbReference type="DrugBank" id="DB01250">
    <property type="generic name" value="Olsalazine"/>
</dbReference>
<dbReference type="DrugBank" id="DB12350">
    <property type="generic name" value="Rostafuroxin"/>
</dbReference>
<dbReference type="DrugBank" id="DB09479">
    <property type="generic name" value="Rubidium Rb-82"/>
</dbReference>
<dbReference type="DrugBank" id="DB16690">
    <property type="generic name" value="Tegoprazan"/>
</dbReference>
<dbReference type="DrugCentral" id="P05026"/>
<dbReference type="TCDB" id="3.A.3.1.1">
    <property type="family name" value="the p-type atpase (p-atpase) superfamily"/>
</dbReference>
<dbReference type="GlyConnect" id="1757">
    <property type="glycosylation" value="21 N-Linked glycans (3 sites)"/>
</dbReference>
<dbReference type="GlyCosmos" id="P05026">
    <property type="glycosylation" value="3 sites, 18 glycans"/>
</dbReference>
<dbReference type="GlyGen" id="P05026">
    <property type="glycosylation" value="5 sites, 119 N-linked glycans (3 sites), 1 O-linked glycan (2 sites)"/>
</dbReference>
<dbReference type="iPTMnet" id="P05026"/>
<dbReference type="MetOSite" id="P05026"/>
<dbReference type="PhosphoSitePlus" id="P05026"/>
<dbReference type="SwissPalm" id="P05026"/>
<dbReference type="BioMuta" id="ATP1B1"/>
<dbReference type="DMDM" id="114392"/>
<dbReference type="CPTAC" id="CPTAC-27"/>
<dbReference type="CPTAC" id="CPTAC-28"/>
<dbReference type="jPOST" id="P05026"/>
<dbReference type="MassIVE" id="P05026"/>
<dbReference type="PaxDb" id="9606-ENSP00000356790"/>
<dbReference type="PeptideAtlas" id="P05026"/>
<dbReference type="ProteomicsDB" id="51770">
    <molecule id="P05026-1"/>
</dbReference>
<dbReference type="ProteomicsDB" id="51771">
    <molecule id="P05026-2"/>
</dbReference>
<dbReference type="Pumba" id="P05026"/>
<dbReference type="Antibodypedia" id="2485">
    <property type="antibodies" value="324 antibodies from 36 providers"/>
</dbReference>
<dbReference type="DNASU" id="481"/>
<dbReference type="Ensembl" id="ENST00000367815.9">
    <molecule id="P05026-1"/>
    <property type="protein sequence ID" value="ENSP00000356789.3"/>
    <property type="gene ID" value="ENSG00000143153.14"/>
</dbReference>
<dbReference type="Ensembl" id="ENST00000367816.5">
    <molecule id="P05026-1"/>
    <property type="protein sequence ID" value="ENSP00000356790.1"/>
    <property type="gene ID" value="ENSG00000143153.14"/>
</dbReference>
<dbReference type="Ensembl" id="ENST00000689522.1">
    <molecule id="P05026-1"/>
    <property type="protein sequence ID" value="ENSP00000509039.1"/>
    <property type="gene ID" value="ENSG00000143153.14"/>
</dbReference>
<dbReference type="Ensembl" id="ENST00000690184.1">
    <molecule id="P05026-1"/>
    <property type="protein sequence ID" value="ENSP00000509517.1"/>
    <property type="gene ID" value="ENSG00000143153.14"/>
</dbReference>
<dbReference type="GeneID" id="481"/>
<dbReference type="KEGG" id="hsa:481"/>
<dbReference type="MANE-Select" id="ENST00000367815.9">
    <property type="protein sequence ID" value="ENSP00000356789.3"/>
    <property type="RefSeq nucleotide sequence ID" value="NM_001677.4"/>
    <property type="RefSeq protein sequence ID" value="NP_001668.1"/>
</dbReference>
<dbReference type="UCSC" id="uc001gfr.2">
    <molecule id="P05026-1"/>
    <property type="organism name" value="human"/>
</dbReference>
<dbReference type="AGR" id="HGNC:804"/>
<dbReference type="CTD" id="481"/>
<dbReference type="DisGeNET" id="481"/>
<dbReference type="GeneCards" id="ATP1B1"/>
<dbReference type="HGNC" id="HGNC:804">
    <property type="gene designation" value="ATP1B1"/>
</dbReference>
<dbReference type="HPA" id="ENSG00000143153">
    <property type="expression patterns" value="Tissue enhanced (kidney)"/>
</dbReference>
<dbReference type="MalaCards" id="ATP1B1"/>
<dbReference type="MIM" id="182330">
    <property type="type" value="gene"/>
</dbReference>
<dbReference type="neXtProt" id="NX_P05026"/>
<dbReference type="OpenTargets" id="ENSG00000143153"/>
<dbReference type="PharmGKB" id="PA66"/>
<dbReference type="VEuPathDB" id="HostDB:ENSG00000143153"/>
<dbReference type="eggNOG" id="KOG3927">
    <property type="taxonomic scope" value="Eukaryota"/>
</dbReference>
<dbReference type="GeneTree" id="ENSGT01030000234579"/>
<dbReference type="HOGENOM" id="CLU_057702_2_0_1"/>
<dbReference type="InParanoid" id="P05026"/>
<dbReference type="OMA" id="WEGFRVF"/>
<dbReference type="OrthoDB" id="5912413at2759"/>
<dbReference type="PAN-GO" id="P05026">
    <property type="GO annotations" value="6 GO annotations based on evolutionary models"/>
</dbReference>
<dbReference type="PhylomeDB" id="P05026"/>
<dbReference type="TreeFam" id="TF314618"/>
<dbReference type="PathwayCommons" id="P05026"/>
<dbReference type="Reactome" id="R-HSA-210991">
    <property type="pathway name" value="Basigin interactions"/>
</dbReference>
<dbReference type="Reactome" id="R-HSA-5578775">
    <property type="pathway name" value="Ion homeostasis"/>
</dbReference>
<dbReference type="Reactome" id="R-HSA-936837">
    <property type="pathway name" value="Ion transport by P-type ATPases"/>
</dbReference>
<dbReference type="Reactome" id="R-HSA-9679191">
    <property type="pathway name" value="Potential therapeutics for SARS"/>
</dbReference>
<dbReference type="SignaLink" id="P05026"/>
<dbReference type="SIGNOR" id="P05026"/>
<dbReference type="BioGRID-ORCS" id="481">
    <property type="hits" value="13 hits in 1166 CRISPR screens"/>
</dbReference>
<dbReference type="CD-CODE" id="FB4E32DD">
    <property type="entry name" value="Presynaptic clusters and postsynaptic densities"/>
</dbReference>
<dbReference type="ChiTaRS" id="ATP1B1">
    <property type="organism name" value="human"/>
</dbReference>
<dbReference type="GeneWiki" id="ATP1B1"/>
<dbReference type="GenomeRNAi" id="481"/>
<dbReference type="Pharos" id="P05026">
    <property type="development level" value="Tclin"/>
</dbReference>
<dbReference type="PRO" id="PR:P05026"/>
<dbReference type="Proteomes" id="UP000005640">
    <property type="component" value="Chromosome 1"/>
</dbReference>
<dbReference type="RNAct" id="P05026">
    <property type="molecule type" value="protein"/>
</dbReference>
<dbReference type="Bgee" id="ENSG00000143153">
    <property type="expression patterns" value="Expressed in substantia nigra pars compacta and 208 other cell types or tissues"/>
</dbReference>
<dbReference type="ExpressionAtlas" id="P05026">
    <property type="expression patterns" value="baseline and differential"/>
</dbReference>
<dbReference type="GO" id="GO:0016324">
    <property type="term" value="C:apical plasma membrane"/>
    <property type="evidence" value="ECO:0000314"/>
    <property type="project" value="ARUK-UCL"/>
</dbReference>
<dbReference type="GO" id="GO:0016323">
    <property type="term" value="C:basolateral plasma membrane"/>
    <property type="evidence" value="ECO:0007669"/>
    <property type="project" value="Ensembl"/>
</dbReference>
<dbReference type="GO" id="GO:0005901">
    <property type="term" value="C:caveola"/>
    <property type="evidence" value="ECO:0007669"/>
    <property type="project" value="Ensembl"/>
</dbReference>
<dbReference type="GO" id="GO:0070062">
    <property type="term" value="C:extracellular exosome"/>
    <property type="evidence" value="ECO:0007005"/>
    <property type="project" value="UniProtKB"/>
</dbReference>
<dbReference type="GO" id="GO:1903561">
    <property type="term" value="C:extracellular vesicle"/>
    <property type="evidence" value="ECO:0007005"/>
    <property type="project" value="UniProtKB"/>
</dbReference>
<dbReference type="GO" id="GO:0014704">
    <property type="term" value="C:intercalated disc"/>
    <property type="evidence" value="ECO:0000250"/>
    <property type="project" value="BHF-UCL"/>
</dbReference>
<dbReference type="GO" id="GO:0016328">
    <property type="term" value="C:lateral plasma membrane"/>
    <property type="evidence" value="ECO:0000314"/>
    <property type="project" value="ARUK-UCL"/>
</dbReference>
<dbReference type="GO" id="GO:0016020">
    <property type="term" value="C:membrane"/>
    <property type="evidence" value="ECO:0000314"/>
    <property type="project" value="BHF-UCL"/>
</dbReference>
<dbReference type="GO" id="GO:0031090">
    <property type="term" value="C:organelle membrane"/>
    <property type="evidence" value="ECO:0000316"/>
    <property type="project" value="ARUK-UCL"/>
</dbReference>
<dbReference type="GO" id="GO:0005886">
    <property type="term" value="C:plasma membrane"/>
    <property type="evidence" value="ECO:0000314"/>
    <property type="project" value="BHF-UCL"/>
</dbReference>
<dbReference type="GO" id="GO:0042383">
    <property type="term" value="C:sarcolemma"/>
    <property type="evidence" value="ECO:0000250"/>
    <property type="project" value="BHF-UCL"/>
</dbReference>
<dbReference type="GO" id="GO:0005890">
    <property type="term" value="C:sodium:potassium-exchanging ATPase complex"/>
    <property type="evidence" value="ECO:0000314"/>
    <property type="project" value="BHF-UCL"/>
</dbReference>
<dbReference type="GO" id="GO:0036126">
    <property type="term" value="C:sperm flagellum"/>
    <property type="evidence" value="ECO:0000314"/>
    <property type="project" value="ARUK-UCL"/>
</dbReference>
<dbReference type="GO" id="GO:0030315">
    <property type="term" value="C:T-tubule"/>
    <property type="evidence" value="ECO:0000316"/>
    <property type="project" value="ARUK-UCL"/>
</dbReference>
<dbReference type="GO" id="GO:0001671">
    <property type="term" value="F:ATPase activator activity"/>
    <property type="evidence" value="ECO:0000314"/>
    <property type="project" value="BHF-UCL"/>
</dbReference>
<dbReference type="GO" id="GO:0051117">
    <property type="term" value="F:ATPase binding"/>
    <property type="evidence" value="ECO:0000353"/>
    <property type="project" value="BHF-UCL"/>
</dbReference>
<dbReference type="GO" id="GO:0023026">
    <property type="term" value="F:MHC class II protein complex binding"/>
    <property type="evidence" value="ECO:0007005"/>
    <property type="project" value="UniProtKB"/>
</dbReference>
<dbReference type="GO" id="GO:0005391">
    <property type="term" value="F:P-type sodium:potassium-exchanging transporter activity"/>
    <property type="evidence" value="ECO:0000314"/>
    <property type="project" value="BHF-UCL"/>
</dbReference>
<dbReference type="GO" id="GO:0046982">
    <property type="term" value="F:protein heterodimerization activity"/>
    <property type="evidence" value="ECO:0000250"/>
    <property type="project" value="ARUK-UCL"/>
</dbReference>
<dbReference type="GO" id="GO:0019901">
    <property type="term" value="F:protein kinase binding"/>
    <property type="evidence" value="ECO:0007669"/>
    <property type="project" value="Ensembl"/>
</dbReference>
<dbReference type="GO" id="GO:0030674">
    <property type="term" value="F:protein-macromolecule adaptor activity"/>
    <property type="evidence" value="ECO:0000314"/>
    <property type="project" value="BHF-UCL"/>
</dbReference>
<dbReference type="GO" id="GO:0141109">
    <property type="term" value="F:transporter activator activity"/>
    <property type="evidence" value="ECO:0000314"/>
    <property type="project" value="BHF-UCL"/>
</dbReference>
<dbReference type="GO" id="GO:0046034">
    <property type="term" value="P:ATP metabolic process"/>
    <property type="evidence" value="ECO:0000314"/>
    <property type="project" value="BHF-UCL"/>
</dbReference>
<dbReference type="GO" id="GO:0060048">
    <property type="term" value="P:cardiac muscle contraction"/>
    <property type="evidence" value="ECO:0000250"/>
    <property type="project" value="BHF-UCL"/>
</dbReference>
<dbReference type="GO" id="GO:0007155">
    <property type="term" value="P:cell adhesion"/>
    <property type="evidence" value="ECO:0007669"/>
    <property type="project" value="UniProtKB-KW"/>
</dbReference>
<dbReference type="GO" id="GO:0086064">
    <property type="term" value="P:cell communication by electrical coupling involved in cardiac conduction"/>
    <property type="evidence" value="ECO:0000304"/>
    <property type="project" value="BHF-UCL"/>
</dbReference>
<dbReference type="GO" id="GO:0010248">
    <property type="term" value="P:establishment or maintenance of transmembrane electrochemical gradient"/>
    <property type="evidence" value="ECO:0000304"/>
    <property type="project" value="BHF-UCL"/>
</dbReference>
<dbReference type="GO" id="GO:0045087">
    <property type="term" value="P:innate immune response"/>
    <property type="evidence" value="ECO:0007669"/>
    <property type="project" value="UniProtKB-KW"/>
</dbReference>
<dbReference type="GO" id="GO:0006874">
    <property type="term" value="P:intracellular calcium ion homeostasis"/>
    <property type="evidence" value="ECO:0000250"/>
    <property type="project" value="BHF-UCL"/>
</dbReference>
<dbReference type="GO" id="GO:0030007">
    <property type="term" value="P:intracellular potassium ion homeostasis"/>
    <property type="evidence" value="ECO:0000314"/>
    <property type="project" value="BHF-UCL"/>
</dbReference>
<dbReference type="GO" id="GO:0006883">
    <property type="term" value="P:intracellular sodium ion homeostasis"/>
    <property type="evidence" value="ECO:0000314"/>
    <property type="project" value="BHF-UCL"/>
</dbReference>
<dbReference type="GO" id="GO:0086009">
    <property type="term" value="P:membrane repolarization"/>
    <property type="evidence" value="ECO:0000314"/>
    <property type="project" value="BHF-UCL"/>
</dbReference>
<dbReference type="GO" id="GO:0086013">
    <property type="term" value="P:membrane repolarization during cardiac muscle cell action potential"/>
    <property type="evidence" value="ECO:0000305"/>
    <property type="project" value="BHF-UCL"/>
</dbReference>
<dbReference type="GO" id="GO:1903288">
    <property type="term" value="P:positive regulation of potassium ion import across plasma membrane"/>
    <property type="evidence" value="ECO:0000314"/>
    <property type="project" value="BHF-UCL"/>
</dbReference>
<dbReference type="GO" id="GO:1903278">
    <property type="term" value="P:positive regulation of sodium ion export across plasma membrane"/>
    <property type="evidence" value="ECO:0000314"/>
    <property type="project" value="BHF-UCL"/>
</dbReference>
<dbReference type="GO" id="GO:1990573">
    <property type="term" value="P:potassium ion import across plasma membrane"/>
    <property type="evidence" value="ECO:0000250"/>
    <property type="project" value="ARUK-UCL"/>
</dbReference>
<dbReference type="GO" id="GO:0072659">
    <property type="term" value="P:protein localization to plasma membrane"/>
    <property type="evidence" value="ECO:0000314"/>
    <property type="project" value="BHF-UCL"/>
</dbReference>
<dbReference type="GO" id="GO:0050821">
    <property type="term" value="P:protein stabilization"/>
    <property type="evidence" value="ECO:0000314"/>
    <property type="project" value="BHF-UCL"/>
</dbReference>
<dbReference type="GO" id="GO:0044861">
    <property type="term" value="P:protein transport into plasma membrane raft"/>
    <property type="evidence" value="ECO:0000304"/>
    <property type="project" value="BHF-UCL"/>
</dbReference>
<dbReference type="GO" id="GO:1902600">
    <property type="term" value="P:proton transmembrane transport"/>
    <property type="evidence" value="ECO:0000303"/>
    <property type="project" value="ComplexPortal"/>
</dbReference>
<dbReference type="GO" id="GO:1903169">
    <property type="term" value="P:regulation of calcium ion transmembrane transport"/>
    <property type="evidence" value="ECO:0007669"/>
    <property type="project" value="Ensembl"/>
</dbReference>
<dbReference type="GO" id="GO:0010882">
    <property type="term" value="P:regulation of cardiac muscle contraction by calcium ion signaling"/>
    <property type="evidence" value="ECO:0000250"/>
    <property type="project" value="BHF-UCL"/>
</dbReference>
<dbReference type="GO" id="GO:0010468">
    <property type="term" value="P:regulation of gene expression"/>
    <property type="evidence" value="ECO:0000250"/>
    <property type="project" value="BHF-UCL"/>
</dbReference>
<dbReference type="GO" id="GO:0055119">
    <property type="term" value="P:relaxation of cardiac muscle"/>
    <property type="evidence" value="ECO:0000250"/>
    <property type="project" value="BHF-UCL"/>
</dbReference>
<dbReference type="GO" id="GO:0001666">
    <property type="term" value="P:response to hypoxia"/>
    <property type="evidence" value="ECO:0007669"/>
    <property type="project" value="Ensembl"/>
</dbReference>
<dbReference type="GO" id="GO:0036376">
    <property type="term" value="P:sodium ion export across plasma membrane"/>
    <property type="evidence" value="ECO:0000250"/>
    <property type="project" value="ARUK-UCL"/>
</dbReference>
<dbReference type="GO" id="GO:0035725">
    <property type="term" value="P:sodium ion transmembrane transport"/>
    <property type="evidence" value="ECO:0000316"/>
    <property type="project" value="ARUK-UCL"/>
</dbReference>
<dbReference type="FunFam" id="1.20.5.170:FF:000062">
    <property type="entry name" value="Sodium/potassium-transporting ATPase subunit beta"/>
    <property type="match status" value="1"/>
</dbReference>
<dbReference type="FunFam" id="2.60.40.1660:FF:000002">
    <property type="entry name" value="Sodium/potassium-transporting ATPase subunit beta"/>
    <property type="match status" value="1"/>
</dbReference>
<dbReference type="Gene3D" id="1.20.5.170">
    <property type="match status" value="1"/>
</dbReference>
<dbReference type="Gene3D" id="2.60.40.1660">
    <property type="entry name" value="Na, k-atpase alpha subunit"/>
    <property type="match status" value="1"/>
</dbReference>
<dbReference type="InterPro" id="IPR000402">
    <property type="entry name" value="Na/K_ATPase_sub_beta"/>
</dbReference>
<dbReference type="InterPro" id="IPR038702">
    <property type="entry name" value="Na/K_ATPase_sub_beta_sf"/>
</dbReference>
<dbReference type="NCBIfam" id="TIGR01107">
    <property type="entry name" value="Na_K_ATPase_bet"/>
    <property type="match status" value="1"/>
</dbReference>
<dbReference type="PANTHER" id="PTHR11523">
    <property type="entry name" value="SODIUM/POTASSIUM-DEPENDENT ATPASE BETA SUBUNIT"/>
    <property type="match status" value="1"/>
</dbReference>
<dbReference type="PANTHER" id="PTHR11523:SF10">
    <property type="entry name" value="SODIUM_POTASSIUM-TRANSPORTING ATPASE SUBUNIT BETA-1"/>
    <property type="match status" value="1"/>
</dbReference>
<dbReference type="Pfam" id="PF00287">
    <property type="entry name" value="Na_K-ATPase"/>
    <property type="match status" value="1"/>
</dbReference>
<dbReference type="PROSITE" id="PS00390">
    <property type="entry name" value="ATPASE_NA_K_BETA_1"/>
    <property type="match status" value="1"/>
</dbReference>
<dbReference type="PROSITE" id="PS00391">
    <property type="entry name" value="ATPASE_NA_K_BETA_2"/>
    <property type="match status" value="1"/>
</dbReference>
<reference key="1">
    <citation type="journal article" date="1986" name="Nucleic Acids Res.">
        <title>Molecular cloning and sequence analysis of human Na,K-ATPase beta-subunit.</title>
        <authorList>
            <person name="Kawakami K."/>
            <person name="Nojima H."/>
            <person name="Ohta T."/>
            <person name="Nagano K."/>
        </authorList>
    </citation>
    <scope>NUCLEOTIDE SEQUENCE [MRNA] (ISOFORM 1)</scope>
</reference>
<reference key="2">
    <citation type="journal article" date="1989" name="Genomics">
        <title>Characterization of two genes for the human Na,K-ATPase beta subunit.</title>
        <authorList>
            <person name="Lane L.K."/>
            <person name="Shull M.M."/>
            <person name="Whitmer K.R."/>
            <person name="Lingrel J.B."/>
        </authorList>
    </citation>
    <scope>NUCLEOTIDE SEQUENCE [GENOMIC DNA]</scope>
</reference>
<reference key="3">
    <citation type="journal article" date="1995" name="Gene">
        <title>Characterization and quantification of full-length and truncated Na,K-ATPase alpha 1 and beta 1 RNA transcripts expressed in human retinal pigment epithelium.</title>
        <authorList>
            <person name="Ruiz A."/>
            <person name="Bhat S.P."/>
            <person name="Bok D."/>
        </authorList>
    </citation>
    <scope>NUCLEOTIDE SEQUENCE [MRNA] (ISOFORM 2)</scope>
    <source>
        <tissue>Retinal pigment epithelium</tissue>
    </source>
</reference>
<reference key="4">
    <citation type="submission" date="2003-08" db="EMBL/GenBank/DDBJ databases">
        <title>Cloning of human full-length CDSs in BD Creator(TM) system donor vector.</title>
        <authorList>
            <person name="Kalnine N."/>
            <person name="Chen X."/>
            <person name="Rolfs A."/>
            <person name="Halleck A."/>
            <person name="Hines L."/>
            <person name="Eisenstein S."/>
            <person name="Koundinya M."/>
            <person name="Raphael J."/>
            <person name="Moreira D."/>
            <person name="Kelley T."/>
            <person name="LaBaer J."/>
            <person name="Lin Y."/>
            <person name="Phelan M."/>
            <person name="Farmer A."/>
        </authorList>
    </citation>
    <scope>NUCLEOTIDE SEQUENCE [LARGE SCALE MRNA] (ISOFORM 1)</scope>
</reference>
<reference key="5">
    <citation type="journal article" date="2006" name="Nature">
        <title>The DNA sequence and biological annotation of human chromosome 1.</title>
        <authorList>
            <person name="Gregory S.G."/>
            <person name="Barlow K.F."/>
            <person name="McLay K.E."/>
            <person name="Kaul R."/>
            <person name="Swarbreck D."/>
            <person name="Dunham A."/>
            <person name="Scott C.E."/>
            <person name="Howe K.L."/>
            <person name="Woodfine K."/>
            <person name="Spencer C.C.A."/>
            <person name="Jones M.C."/>
            <person name="Gillson C."/>
            <person name="Searle S."/>
            <person name="Zhou Y."/>
            <person name="Kokocinski F."/>
            <person name="McDonald L."/>
            <person name="Evans R."/>
            <person name="Phillips K."/>
            <person name="Atkinson A."/>
            <person name="Cooper R."/>
            <person name="Jones C."/>
            <person name="Hall R.E."/>
            <person name="Andrews T.D."/>
            <person name="Lloyd C."/>
            <person name="Ainscough R."/>
            <person name="Almeida J.P."/>
            <person name="Ambrose K.D."/>
            <person name="Anderson F."/>
            <person name="Andrew R.W."/>
            <person name="Ashwell R.I.S."/>
            <person name="Aubin K."/>
            <person name="Babbage A.K."/>
            <person name="Bagguley C.L."/>
            <person name="Bailey J."/>
            <person name="Beasley H."/>
            <person name="Bethel G."/>
            <person name="Bird C.P."/>
            <person name="Bray-Allen S."/>
            <person name="Brown J.Y."/>
            <person name="Brown A.J."/>
            <person name="Buckley D."/>
            <person name="Burton J."/>
            <person name="Bye J."/>
            <person name="Carder C."/>
            <person name="Chapman J.C."/>
            <person name="Clark S.Y."/>
            <person name="Clarke G."/>
            <person name="Clee C."/>
            <person name="Cobley V."/>
            <person name="Collier R.E."/>
            <person name="Corby N."/>
            <person name="Coville G.J."/>
            <person name="Davies J."/>
            <person name="Deadman R."/>
            <person name="Dunn M."/>
            <person name="Earthrowl M."/>
            <person name="Ellington A.G."/>
            <person name="Errington H."/>
            <person name="Frankish A."/>
            <person name="Frankland J."/>
            <person name="French L."/>
            <person name="Garner P."/>
            <person name="Garnett J."/>
            <person name="Gay L."/>
            <person name="Ghori M.R.J."/>
            <person name="Gibson R."/>
            <person name="Gilby L.M."/>
            <person name="Gillett W."/>
            <person name="Glithero R.J."/>
            <person name="Grafham D.V."/>
            <person name="Griffiths C."/>
            <person name="Griffiths-Jones S."/>
            <person name="Grocock R."/>
            <person name="Hammond S."/>
            <person name="Harrison E.S.I."/>
            <person name="Hart E."/>
            <person name="Haugen E."/>
            <person name="Heath P.D."/>
            <person name="Holmes S."/>
            <person name="Holt K."/>
            <person name="Howden P.J."/>
            <person name="Hunt A.R."/>
            <person name="Hunt S.E."/>
            <person name="Hunter G."/>
            <person name="Isherwood J."/>
            <person name="James R."/>
            <person name="Johnson C."/>
            <person name="Johnson D."/>
            <person name="Joy A."/>
            <person name="Kay M."/>
            <person name="Kershaw J.K."/>
            <person name="Kibukawa M."/>
            <person name="Kimberley A.M."/>
            <person name="King A."/>
            <person name="Knights A.J."/>
            <person name="Lad H."/>
            <person name="Laird G."/>
            <person name="Lawlor S."/>
            <person name="Leongamornlert D.A."/>
            <person name="Lloyd D.M."/>
            <person name="Loveland J."/>
            <person name="Lovell J."/>
            <person name="Lush M.J."/>
            <person name="Lyne R."/>
            <person name="Martin S."/>
            <person name="Mashreghi-Mohammadi M."/>
            <person name="Matthews L."/>
            <person name="Matthews N.S.W."/>
            <person name="McLaren S."/>
            <person name="Milne S."/>
            <person name="Mistry S."/>
            <person name="Moore M.J.F."/>
            <person name="Nickerson T."/>
            <person name="O'Dell C.N."/>
            <person name="Oliver K."/>
            <person name="Palmeiri A."/>
            <person name="Palmer S.A."/>
            <person name="Parker A."/>
            <person name="Patel D."/>
            <person name="Pearce A.V."/>
            <person name="Peck A.I."/>
            <person name="Pelan S."/>
            <person name="Phelps K."/>
            <person name="Phillimore B.J."/>
            <person name="Plumb R."/>
            <person name="Rajan J."/>
            <person name="Raymond C."/>
            <person name="Rouse G."/>
            <person name="Saenphimmachak C."/>
            <person name="Sehra H.K."/>
            <person name="Sheridan E."/>
            <person name="Shownkeen R."/>
            <person name="Sims S."/>
            <person name="Skuce C.D."/>
            <person name="Smith M."/>
            <person name="Steward C."/>
            <person name="Subramanian S."/>
            <person name="Sycamore N."/>
            <person name="Tracey A."/>
            <person name="Tromans A."/>
            <person name="Van Helmond Z."/>
            <person name="Wall M."/>
            <person name="Wallis J.M."/>
            <person name="White S."/>
            <person name="Whitehead S.L."/>
            <person name="Wilkinson J.E."/>
            <person name="Willey D.L."/>
            <person name="Williams H."/>
            <person name="Wilming L."/>
            <person name="Wray P.W."/>
            <person name="Wu Z."/>
            <person name="Coulson A."/>
            <person name="Vaudin M."/>
            <person name="Sulston J.E."/>
            <person name="Durbin R.M."/>
            <person name="Hubbard T."/>
            <person name="Wooster R."/>
            <person name="Dunham I."/>
            <person name="Carter N.P."/>
            <person name="McVean G."/>
            <person name="Ross M.T."/>
            <person name="Harrow J."/>
            <person name="Olson M.V."/>
            <person name="Beck S."/>
            <person name="Rogers J."/>
            <person name="Bentley D.R."/>
        </authorList>
    </citation>
    <scope>NUCLEOTIDE SEQUENCE [LARGE SCALE GENOMIC DNA]</scope>
</reference>
<reference key="6">
    <citation type="journal article" date="2004" name="Genome Res.">
        <title>The status, quality, and expansion of the NIH full-length cDNA project: the Mammalian Gene Collection (MGC).</title>
        <authorList>
            <consortium name="The MGC Project Team"/>
        </authorList>
    </citation>
    <scope>NUCLEOTIDE SEQUENCE [LARGE SCALE MRNA] (ISOFORM 1)</scope>
    <source>
        <tissue>Kidney</tissue>
    </source>
</reference>
<reference key="7">
    <citation type="journal article" date="1989" name="FEBS Lett.">
        <title>Human Na(+), K(+)-ATPase genes. Beta subunit gene family contains at least one gene and one pseudogene.</title>
        <authorList>
            <person name="Ushkaryov Y.A."/>
            <person name="Monastyrskaya G.S."/>
            <person name="Broude N.E."/>
            <person name="Nikiforova N.N."/>
            <person name="Bessarab B.A."/>
            <person name="Orlova M.Y."/>
            <person name="Petrukhin K.E."/>
            <person name="Modyanov N.N."/>
            <person name="Sverdlov E.D."/>
        </authorList>
    </citation>
    <scope>NUCLEOTIDE SEQUENCE [GENOMIC DNA] OF 34-72</scope>
    <source>
        <tissue>Sperm</tissue>
    </source>
</reference>
<reference key="8">
    <citation type="journal article" date="2003" name="Nat. Biotechnol.">
        <title>Identification and quantification of N-linked glycoproteins using hydrazide chemistry, stable isotope labeling and mass spectrometry.</title>
        <authorList>
            <person name="Zhang H."/>
            <person name="Li X.-J."/>
            <person name="Martin D.B."/>
            <person name="Aebersold R."/>
        </authorList>
    </citation>
    <scope>GLYCOSYLATION AT ASN-158; ASN-193 AND ASN-265</scope>
</reference>
<reference key="9">
    <citation type="journal article" date="2009" name="Biochemistry">
        <title>A C-terminal lobe of the beta subunit of Na,K-ATPase and H,K-ATPase resembles cell adhesion molecules.</title>
        <authorList>
            <person name="Bab-Dinitz E."/>
            <person name="Albeck S."/>
            <person name="Peleg Y."/>
            <person name="Brumfeld V."/>
            <person name="Gottschalk K.E."/>
            <person name="Karlish S.J."/>
        </authorList>
    </citation>
    <scope>FUNCTION IN ADHESION</scope>
    <scope>DOMAIN IMMUNOGLOBULIN-LIKE</scope>
</reference>
<reference key="10">
    <citation type="journal article" date="2009" name="J. Proteome Res.">
        <title>Glycoproteomics analysis of human liver tissue by combination of multiple enzyme digestion and hydrazide chemistry.</title>
        <authorList>
            <person name="Chen R."/>
            <person name="Jiang X."/>
            <person name="Sun D."/>
            <person name="Han G."/>
            <person name="Wang F."/>
            <person name="Ye M."/>
            <person name="Wang L."/>
            <person name="Zou H."/>
        </authorList>
    </citation>
    <scope>GLYCOSYLATION [LARGE SCALE ANALYSIS] AT ASN-158; ASN-193 AND ASN-265</scope>
    <source>
        <tissue>Liver</tissue>
    </source>
</reference>
<reference key="11">
    <citation type="journal article" date="2009" name="Nat. Biotechnol.">
        <title>Mass-spectrometric identification and relative quantification of N-linked cell surface glycoproteins.</title>
        <authorList>
            <person name="Wollscheid B."/>
            <person name="Bausch-Fluck D."/>
            <person name="Henderson C."/>
            <person name="O'Brien R."/>
            <person name="Bibel M."/>
            <person name="Schiess R."/>
            <person name="Aebersold R."/>
            <person name="Watts J.D."/>
        </authorList>
    </citation>
    <scope>GLYCOSYLATION [LARGE SCALE ANALYSIS] AT ASN-265</scope>
    <source>
        <tissue>Leukemic T-cell</tissue>
    </source>
</reference>
<reference key="12">
    <citation type="journal article" date="2011" name="BMC Syst. Biol.">
        <title>Initial characterization of the human central proteome.</title>
        <authorList>
            <person name="Burkard T.R."/>
            <person name="Planyavsky M."/>
            <person name="Kaupe I."/>
            <person name="Breitwieser F.P."/>
            <person name="Buerckstuemmer T."/>
            <person name="Bennett K.L."/>
            <person name="Superti-Furga G."/>
            <person name="Colinge J."/>
        </authorList>
    </citation>
    <scope>IDENTIFICATION BY MASS SPECTROMETRY [LARGE SCALE ANALYSIS]</scope>
</reference>
<reference key="13">
    <citation type="journal article" date="2012" name="Hum. Mol. Genet.">
        <title>Megalencephalic leukoencephalopathy with subcortical cysts protein 1 functionally cooperates with the TRPV4 cation channel to activate the response of astrocytes to osmotic stress: dysregulation by pathological mutations.</title>
        <authorList>
            <person name="Lanciotti A."/>
            <person name="Brignone M.S."/>
            <person name="Molinari P."/>
            <person name="Visentin S."/>
            <person name="De Nuccio C."/>
            <person name="Macchia G."/>
            <person name="Aiello C."/>
            <person name="Bertini E."/>
            <person name="Aloisi F."/>
            <person name="Petrucci T.C."/>
            <person name="Ambrosini E."/>
        </authorList>
    </citation>
    <scope>INTERACTION WITH MLC1</scope>
</reference>
<reference key="14">
    <citation type="journal article" date="2014" name="J. Proteomics">
        <title>An enzyme assisted RP-RPLC approach for in-depth analysis of human liver phosphoproteome.</title>
        <authorList>
            <person name="Bian Y."/>
            <person name="Song C."/>
            <person name="Cheng K."/>
            <person name="Dong M."/>
            <person name="Wang F."/>
            <person name="Huang J."/>
            <person name="Sun D."/>
            <person name="Wang L."/>
            <person name="Ye M."/>
            <person name="Zou H."/>
        </authorList>
    </citation>
    <scope>IDENTIFICATION BY MASS SPECTROMETRY [LARGE SCALE ANALYSIS]</scope>
    <source>
        <tissue>Liver</tissue>
    </source>
</reference>
<reference key="15">
    <citation type="journal article" date="2015" name="PLoS ONE">
        <title>Autism and intellectual disability-associated KIRREL3 interacts with neuronal proteins MAP1B and MYO16 with potential roles in neurodevelopment.</title>
        <authorList>
            <person name="Liu Y.F."/>
            <person name="Sowell S.M."/>
            <person name="Luo Y."/>
            <person name="Chaubey A."/>
            <person name="Cameron R.S."/>
            <person name="Kim H.G."/>
            <person name="Srivastava A.K."/>
        </authorList>
    </citation>
    <scope>INTERACTION WITH KIRREL3</scope>
</reference>
<reference key="16">
    <citation type="journal article" date="2021" name="J. Immunol.">
        <title>Inducible ATP1B1 Upregulates Antiviral Innate Immune Responses by the Ubiquitination of TRAF3 and TRAF6.</title>
        <authorList>
            <person name="Cao W."/>
            <person name="Guo Y."/>
            <person name="Cheng Z."/>
            <person name="Xu G."/>
            <person name="Zuo Q."/>
            <person name="Nie L."/>
            <person name="Huang Y."/>
            <person name="Liu S."/>
            <person name="Zhu Y."/>
        </authorList>
    </citation>
    <scope>FUNCTION</scope>
    <scope>SUBCELLULAR LOCATION</scope>
    <scope>INTERACTION WITH TRAF3 AND TRAF6</scope>
</reference>
<evidence type="ECO:0000250" key="1"/>
<evidence type="ECO:0000250" key="2">
    <source>
        <dbReference type="UniProtKB" id="P07340"/>
    </source>
</evidence>
<evidence type="ECO:0000250" key="3">
    <source>
        <dbReference type="UniProtKB" id="P14094"/>
    </source>
</evidence>
<evidence type="ECO:0000255" key="4"/>
<evidence type="ECO:0000269" key="5">
    <source>
    </source>
</evidence>
<evidence type="ECO:0000269" key="6">
    <source>
    </source>
</evidence>
<evidence type="ECO:0000269" key="7">
    <source>
    </source>
</evidence>
<evidence type="ECO:0000269" key="8">
    <source>
    </source>
</evidence>
<evidence type="ECO:0000269" key="9">
    <source>
    </source>
</evidence>
<evidence type="ECO:0000269" key="10">
    <source>
    </source>
</evidence>
<evidence type="ECO:0000269" key="11">
    <source>
    </source>
</evidence>
<evidence type="ECO:0000303" key="12">
    <source>
    </source>
</evidence>
<evidence type="ECO:0000305" key="13"/>
<evidence type="ECO:0007829" key="14">
    <source>
        <dbReference type="PDB" id="7E20"/>
    </source>
</evidence>
<evidence type="ECO:0007829" key="15">
    <source>
        <dbReference type="PDB" id="8D3V"/>
    </source>
</evidence>
<evidence type="ECO:0007829" key="16">
    <source>
        <dbReference type="PDB" id="8ZYJ"/>
    </source>
</evidence>
<feature type="chain" id="PRO_0000219097" description="Sodium/potassium-transporting ATPase subunit beta-1">
    <location>
        <begin position="1"/>
        <end position="303"/>
    </location>
</feature>
<feature type="topological domain" description="Cytoplasmic" evidence="4">
    <location>
        <begin position="1"/>
        <end position="34"/>
    </location>
</feature>
<feature type="transmembrane region" description="Helical; Signal-anchor for type II membrane protein" evidence="4">
    <location>
        <begin position="35"/>
        <end position="62"/>
    </location>
</feature>
<feature type="topological domain" description="Extracellular" evidence="4">
    <location>
        <begin position="63"/>
        <end position="303"/>
    </location>
</feature>
<feature type="region of interest" description="immunoglobulin-like">
    <location>
        <begin position="191"/>
        <end position="303"/>
    </location>
</feature>
<feature type="modified residue" description="Phosphoserine" evidence="2">
    <location>
        <position position="11"/>
    </location>
</feature>
<feature type="modified residue" description="Phosphotyrosine" evidence="3">
    <location>
        <position position="101"/>
    </location>
</feature>
<feature type="glycosylation site" description="N-linked (GlcNAc...) asparagine" evidence="5 6">
    <location>
        <position position="158"/>
    </location>
</feature>
<feature type="glycosylation site" description="N-linked (GlcNAc...) asparagine" evidence="5 6">
    <location>
        <position position="193"/>
    </location>
</feature>
<feature type="glycosylation site" description="N-linked (GlcNAc...) asparagine" evidence="5 6 7">
    <location>
        <position position="265"/>
    </location>
</feature>
<feature type="disulfide bond" evidence="1">
    <location>
        <begin position="126"/>
        <end position="149"/>
    </location>
</feature>
<feature type="disulfide bond" evidence="1">
    <location>
        <begin position="159"/>
        <end position="175"/>
    </location>
</feature>
<feature type="disulfide bond" evidence="1">
    <location>
        <begin position="213"/>
        <end position="276"/>
    </location>
</feature>
<feature type="splice variant" id="VSP_000349" description="In isoform 2." evidence="12">
    <original>EVKS</original>
    <variation>KF</variation>
    <location>
        <begin position="300"/>
        <end position="303"/>
    </location>
</feature>
<feature type="turn" evidence="14">
    <location>
        <begin position="11"/>
        <end position="14"/>
    </location>
</feature>
<feature type="turn" evidence="14">
    <location>
        <begin position="19"/>
        <end position="22"/>
    </location>
</feature>
<feature type="strand" evidence="15">
    <location>
        <begin position="23"/>
        <end position="25"/>
    </location>
</feature>
<feature type="helix" evidence="16">
    <location>
        <begin position="29"/>
        <end position="59"/>
    </location>
</feature>
<feature type="strand" evidence="16">
    <location>
        <begin position="63"/>
        <end position="65"/>
    </location>
</feature>
<feature type="turn" evidence="16">
    <location>
        <begin position="70"/>
        <end position="72"/>
    </location>
</feature>
<feature type="strand" evidence="16">
    <location>
        <begin position="76"/>
        <end position="81"/>
    </location>
</feature>
<feature type="strand" evidence="16">
    <location>
        <begin position="84"/>
        <end position="90"/>
    </location>
</feature>
<feature type="turn" evidence="14">
    <location>
        <begin position="95"/>
        <end position="98"/>
    </location>
</feature>
<feature type="helix" evidence="16">
    <location>
        <begin position="99"/>
        <end position="108"/>
    </location>
</feature>
<feature type="helix" evidence="16">
    <location>
        <begin position="109"/>
        <end position="112"/>
    </location>
</feature>
<feature type="helix" evidence="16">
    <location>
        <begin position="114"/>
        <end position="116"/>
    </location>
</feature>
<feature type="turn" evidence="16">
    <location>
        <begin position="120"/>
        <end position="122"/>
    </location>
</feature>
<feature type="strand" evidence="16">
    <location>
        <begin position="139"/>
        <end position="145"/>
    </location>
</feature>
<feature type="helix" evidence="16">
    <location>
        <begin position="153"/>
        <end position="159"/>
    </location>
</feature>
<feature type="strand" evidence="16">
    <location>
        <begin position="160"/>
        <end position="163"/>
    </location>
</feature>
<feature type="turn" evidence="16">
    <location>
        <begin position="165"/>
        <end position="172"/>
    </location>
</feature>
<feature type="strand" evidence="16">
    <location>
        <begin position="175"/>
        <end position="180"/>
    </location>
</feature>
<feature type="strand" evidence="14">
    <location>
        <begin position="194"/>
        <end position="200"/>
    </location>
</feature>
<feature type="strand" evidence="16">
    <location>
        <begin position="208"/>
        <end position="217"/>
    </location>
</feature>
<feature type="helix" evidence="16">
    <location>
        <begin position="218"/>
        <end position="223"/>
    </location>
</feature>
<feature type="strand" evidence="16">
    <location>
        <begin position="227"/>
        <end position="239"/>
    </location>
</feature>
<feature type="helix" evidence="16">
    <location>
        <begin position="240"/>
        <end position="242"/>
    </location>
</feature>
<feature type="helix" evidence="16">
    <location>
        <begin position="247"/>
        <end position="250"/>
    </location>
</feature>
<feature type="strand" evidence="16">
    <location>
        <begin position="259"/>
        <end position="263"/>
    </location>
</feature>
<feature type="strand" evidence="14">
    <location>
        <begin position="268"/>
        <end position="270"/>
    </location>
</feature>
<feature type="strand" evidence="16">
    <location>
        <begin position="272"/>
        <end position="278"/>
    </location>
</feature>
<feature type="strand" evidence="16">
    <location>
        <begin position="292"/>
        <end position="301"/>
    </location>
</feature>
<sequence>MARGKAKEEGSWKKFIWNSEKKEFLGRTGGSWFKILLFYVIFYGCLAGIFIGTIQVMLLTISEFKPTYQDRVAPPGLTQIPQIQKTEISFRPNDPKSYEAYVLNIVRFLEKYKDSAQRDDMIFEDCGDVPSEPKERGDFNHERGERKVCRFKLEWLGNCSGLNDETYGYKEGKPCIIIKLNRVLGFKPKPPKNESLETYPVMKYNPNVLPVQCTGKRDEDKDKVGNVEYFGLGNSPGFPLQYYPYYGKLLQPKYLQPLLAVQFTNLTMDTEIRIECKAYGENIGYSEKDRFQGRFDVKIEVKS</sequence>